<comment type="function">
    <text evidence="1">Plays a major role in programmed cell death (PCD, apoptosis). egl-1 binds to and directly inhibits the activity of ced-9, releasing the cell death activator ced-4 from a ced-9/ced-4 containing protein complex and allowing ced-4 to activate the cell-killing caspase ced-3. During larval development, required for the elimination of transient presynaptic components downstream of egl-1 and upstream of ced-4 and ced-3 apoptotic pathway.</text>
</comment>
<comment type="subunit">
    <text evidence="1">Interacts with asymmetric homodimer ced-4; the interaction sequesters ced-4. Interacts with egl-1; the interaction results in ced-4 release. Interacts with dre-1; the interaction inhibits ced-9 activity, either directly or indirectly. Interacts with dct-1. May form a complex composed of ced-9, ced-4 and mac-1.</text>
</comment>
<comment type="subcellular location">
    <subcellularLocation>
        <location evidence="1">Perikaryon</location>
    </subcellularLocation>
    <subcellularLocation>
        <location evidence="1">Synapse</location>
    </subcellularLocation>
    <subcellularLocation>
        <location evidence="1">Endomembrane system</location>
        <topology evidence="1">Peripheral membrane protein</topology>
    </subcellularLocation>
    <subcellularLocation>
        <location evidence="1">Mitochondrion membrane</location>
        <topology evidence="1">Peripheral membrane protein</topology>
    </subcellularLocation>
    <text evidence="1">Intracellular membranes, mitochondrial, and perinuclear region. Localizes to synapses of DD motor neurons. Synaptic localization is dependent on axonal mitochondria.</text>
</comment>
<comment type="similarity">
    <text evidence="5">Belongs to the Bcl-2 family.</text>
</comment>
<comment type="sequence caution" evidence="5">
    <conflict type="erroneous initiation">
        <sequence resource="EMBL-CDS" id="AAA20077"/>
    </conflict>
    <text>Extended N-terminus.</text>
</comment>
<protein>
    <recommendedName>
        <fullName>Apoptosis regulator ced-9</fullName>
    </recommendedName>
    <alternativeName>
        <fullName>Cell death protein 9</fullName>
    </alternativeName>
</protein>
<accession>P41957</accession>
<accession>A8WL37</accession>
<accession>Q60JB2</accession>
<sequence length="266" mass="30640">MVDSMDMANSSQNTFRRRTMATSEMREFLSTKDAEPNNFGMQTIPESPTPSTPTRRMSIGDSTRIYDWEEPRFNIQGFVVDYFTYRIAQNGLDWYDAPALPDGVQKEHEMMRSLGTIFEKRHMEMFENFSEQLLAVPKISFSLYQEVVQTVGNSSNTPCPMSYGRLIGLISFGGMVAAKMMESAELQGQVRNLLMYTSLFIKTRIRQSWKEHNRSWADFMKLGQQMKEDYEKEKDAEEGKRLKSWSIIGASVIAVIVCGRIIFSFK</sequence>
<name>CED9_CAEBR</name>
<reference key="1">
    <citation type="journal article" date="1994" name="Cell">
        <title>C. elegans cell survival gene ced-9 encodes a functional homolog of the mammalian proto-oncogene bcl-2.</title>
        <authorList>
            <person name="Hengartner M.O."/>
            <person name="Horvitz H.R."/>
        </authorList>
    </citation>
    <scope>NUCLEOTIDE SEQUENCE [GENOMIC DNA]</scope>
</reference>
<reference key="2">
    <citation type="journal article" date="2003" name="PLoS Biol.">
        <title>The genome sequence of Caenorhabditis briggsae: a platform for comparative genomics.</title>
        <authorList>
            <person name="Stein L.D."/>
            <person name="Bao Z."/>
            <person name="Blasiar D."/>
            <person name="Blumenthal T."/>
            <person name="Brent M.R."/>
            <person name="Chen N."/>
            <person name="Chinwalla A."/>
            <person name="Clarke L."/>
            <person name="Clee C."/>
            <person name="Coghlan A."/>
            <person name="Coulson A."/>
            <person name="D'Eustachio P."/>
            <person name="Fitch D.H.A."/>
            <person name="Fulton L.A."/>
            <person name="Fulton R.E."/>
            <person name="Griffiths-Jones S."/>
            <person name="Harris T.W."/>
            <person name="Hillier L.W."/>
            <person name="Kamath R."/>
            <person name="Kuwabara P.E."/>
            <person name="Mardis E.R."/>
            <person name="Marra M.A."/>
            <person name="Miner T.L."/>
            <person name="Minx P."/>
            <person name="Mullikin J.C."/>
            <person name="Plumb R.W."/>
            <person name="Rogers J."/>
            <person name="Schein J.E."/>
            <person name="Sohrmann M."/>
            <person name="Spieth J."/>
            <person name="Stajich J.E."/>
            <person name="Wei C."/>
            <person name="Willey D."/>
            <person name="Wilson R.K."/>
            <person name="Durbin R.M."/>
            <person name="Waterston R.H."/>
        </authorList>
    </citation>
    <scope>NUCLEOTIDE SEQUENCE [LARGE SCALE GENOMIC DNA]</scope>
    <source>
        <strain>AF16</strain>
    </source>
</reference>
<keyword id="KW-0053">Apoptosis</keyword>
<keyword id="KW-0472">Membrane</keyword>
<keyword id="KW-0496">Mitochondrion</keyword>
<keyword id="KW-1185">Reference proteome</keyword>
<keyword id="KW-0770">Synapse</keyword>
<gene>
    <name type="primary">ced-9</name>
    <name type="ORF">CBG24606</name>
</gene>
<feature type="chain" id="PRO_0000143096" description="Apoptosis regulator ced-9">
    <location>
        <begin position="1"/>
        <end position="266"/>
    </location>
</feature>
<feature type="region of interest" description="Disordered" evidence="4">
    <location>
        <begin position="1"/>
        <end position="58"/>
    </location>
</feature>
<feature type="short sequence motif" description="BH4" evidence="3">
    <location>
        <begin position="75"/>
        <end position="94"/>
    </location>
</feature>
<feature type="short sequence motif" description="BH1" evidence="2">
    <location>
        <begin position="156"/>
        <end position="174"/>
    </location>
</feature>
<feature type="short sequence motif" description="BH2" evidence="5">
    <location>
        <begin position="208"/>
        <end position="223"/>
    </location>
</feature>
<feature type="compositionally biased region" description="Basic and acidic residues" evidence="4">
    <location>
        <begin position="24"/>
        <end position="35"/>
    </location>
</feature>
<organism>
    <name type="scientific">Caenorhabditis briggsae</name>
    <dbReference type="NCBI Taxonomy" id="6238"/>
    <lineage>
        <taxon>Eukaryota</taxon>
        <taxon>Metazoa</taxon>
        <taxon>Ecdysozoa</taxon>
        <taxon>Nematoda</taxon>
        <taxon>Chromadorea</taxon>
        <taxon>Rhabditida</taxon>
        <taxon>Rhabditina</taxon>
        <taxon>Rhabditomorpha</taxon>
        <taxon>Rhabditoidea</taxon>
        <taxon>Rhabditidae</taxon>
        <taxon>Peloderinae</taxon>
        <taxon>Caenorhabditis</taxon>
    </lineage>
</organism>
<dbReference type="EMBL" id="L26546">
    <property type="protein sequence ID" value="AAA20077.1"/>
    <property type="status" value="ALT_INIT"/>
    <property type="molecule type" value="Unassigned_DNA"/>
</dbReference>
<dbReference type="EMBL" id="HE601354">
    <property type="protein sequence ID" value="CAP21182.3"/>
    <property type="molecule type" value="Genomic_DNA"/>
</dbReference>
<dbReference type="SMR" id="P41957"/>
<dbReference type="FunCoup" id="P41957">
    <property type="interactions" value="13"/>
</dbReference>
<dbReference type="STRING" id="6238.P41957"/>
<dbReference type="EnsemblMetazoa" id="CBG24606.1">
    <property type="protein sequence ID" value="CBG24606.1"/>
    <property type="gene ID" value="WBGene00042676"/>
</dbReference>
<dbReference type="KEGG" id="cbr:CBG_24606"/>
<dbReference type="CTD" id="8583298"/>
<dbReference type="WormBase" id="CBG24606">
    <property type="protein sequence ID" value="CBP12970"/>
    <property type="gene ID" value="WBGene00042676"/>
    <property type="gene designation" value="Cbr-ced-9"/>
</dbReference>
<dbReference type="eggNOG" id="KOG4728">
    <property type="taxonomic scope" value="Eukaryota"/>
</dbReference>
<dbReference type="HOGENOM" id="CLU_1046733_0_0_1"/>
<dbReference type="InParanoid" id="P41957"/>
<dbReference type="OMA" id="ASYTSKF"/>
<dbReference type="Proteomes" id="UP000008549">
    <property type="component" value="Unassembled WGS sequence"/>
</dbReference>
<dbReference type="GO" id="GO:0012505">
    <property type="term" value="C:endomembrane system"/>
    <property type="evidence" value="ECO:0007669"/>
    <property type="project" value="UniProtKB-SubCell"/>
</dbReference>
<dbReference type="GO" id="GO:0005741">
    <property type="term" value="C:mitochondrial outer membrane"/>
    <property type="evidence" value="ECO:0000318"/>
    <property type="project" value="GO_Central"/>
</dbReference>
<dbReference type="GO" id="GO:0043204">
    <property type="term" value="C:perikaryon"/>
    <property type="evidence" value="ECO:0007669"/>
    <property type="project" value="UniProtKB-SubCell"/>
</dbReference>
<dbReference type="GO" id="GO:0045202">
    <property type="term" value="C:synapse"/>
    <property type="evidence" value="ECO:0007669"/>
    <property type="project" value="UniProtKB-SubCell"/>
</dbReference>
<dbReference type="GO" id="GO:0015267">
    <property type="term" value="F:channel activity"/>
    <property type="evidence" value="ECO:0000318"/>
    <property type="project" value="GO_Central"/>
</dbReference>
<dbReference type="GO" id="GO:0097192">
    <property type="term" value="P:extrinsic apoptotic signaling pathway in absence of ligand"/>
    <property type="evidence" value="ECO:0000318"/>
    <property type="project" value="GO_Central"/>
</dbReference>
<dbReference type="GO" id="GO:0008630">
    <property type="term" value="P:intrinsic apoptotic signaling pathway in response to DNA damage"/>
    <property type="evidence" value="ECO:0000318"/>
    <property type="project" value="GO_Central"/>
</dbReference>
<dbReference type="GO" id="GO:0043065">
    <property type="term" value="P:positive regulation of apoptotic process"/>
    <property type="evidence" value="ECO:0000318"/>
    <property type="project" value="GO_Central"/>
</dbReference>
<dbReference type="GO" id="GO:0001836">
    <property type="term" value="P:release of cytochrome c from mitochondria"/>
    <property type="evidence" value="ECO:0000318"/>
    <property type="project" value="GO_Central"/>
</dbReference>
<dbReference type="CDD" id="cd06845">
    <property type="entry name" value="Bcl-2_like"/>
    <property type="match status" value="1"/>
</dbReference>
<dbReference type="FunFam" id="1.10.437.10:FF:000022">
    <property type="entry name" value="Apoptosis regulator ced-9"/>
    <property type="match status" value="1"/>
</dbReference>
<dbReference type="Gene3D" id="1.10.437.10">
    <property type="entry name" value="Blc2-like"/>
    <property type="match status" value="1"/>
</dbReference>
<dbReference type="InterPro" id="IPR036834">
    <property type="entry name" value="Bcl-2-like_sf"/>
</dbReference>
<dbReference type="InterPro" id="IPR046371">
    <property type="entry name" value="Bcl-2_BH1-3"/>
</dbReference>
<dbReference type="InterPro" id="IPR026298">
    <property type="entry name" value="Bcl-2_fam"/>
</dbReference>
<dbReference type="InterPro" id="IPR002475">
    <property type="entry name" value="Bcl2-like"/>
</dbReference>
<dbReference type="InterPro" id="IPR020717">
    <property type="entry name" value="Bcl2_BH1_motif_CS"/>
</dbReference>
<dbReference type="InterPro" id="IPR003093">
    <property type="entry name" value="Bcl2_BH4"/>
</dbReference>
<dbReference type="PANTHER" id="PTHR11256:SF50">
    <property type="entry name" value="APOPTOSIS REGULATOR CED-9"/>
    <property type="match status" value="1"/>
</dbReference>
<dbReference type="PANTHER" id="PTHR11256">
    <property type="entry name" value="BCL-2 RELATED"/>
    <property type="match status" value="1"/>
</dbReference>
<dbReference type="Pfam" id="PF00452">
    <property type="entry name" value="Bcl-2"/>
    <property type="match status" value="1"/>
</dbReference>
<dbReference type="Pfam" id="PF02180">
    <property type="entry name" value="BH4"/>
    <property type="match status" value="1"/>
</dbReference>
<dbReference type="SMART" id="SM00337">
    <property type="entry name" value="BCL"/>
    <property type="match status" value="1"/>
</dbReference>
<dbReference type="SMART" id="SM00265">
    <property type="entry name" value="BH4"/>
    <property type="match status" value="1"/>
</dbReference>
<dbReference type="SUPFAM" id="SSF56854">
    <property type="entry name" value="Bcl-2 inhibitors of programmed cell death"/>
    <property type="match status" value="1"/>
</dbReference>
<dbReference type="PROSITE" id="PS50062">
    <property type="entry name" value="BCL2_FAMILY"/>
    <property type="match status" value="1"/>
</dbReference>
<dbReference type="PROSITE" id="PS01080">
    <property type="entry name" value="BH1"/>
    <property type="match status" value="1"/>
</dbReference>
<dbReference type="PROSITE" id="PS50063">
    <property type="entry name" value="BH4_2"/>
    <property type="match status" value="1"/>
</dbReference>
<evidence type="ECO:0000250" key="1">
    <source>
        <dbReference type="UniProtKB" id="P41958"/>
    </source>
</evidence>
<evidence type="ECO:0000255" key="2"/>
<evidence type="ECO:0000255" key="3">
    <source>
        <dbReference type="PROSITE-ProRule" id="PRU00025"/>
    </source>
</evidence>
<evidence type="ECO:0000256" key="4">
    <source>
        <dbReference type="SAM" id="MobiDB-lite"/>
    </source>
</evidence>
<evidence type="ECO:0000305" key="5"/>
<proteinExistence type="inferred from homology"/>